<dbReference type="EMBL" id="AE000512">
    <property type="protein sequence ID" value="AAD36672.1"/>
    <property type="molecule type" value="Genomic_DNA"/>
</dbReference>
<dbReference type="PIR" id="A72235">
    <property type="entry name" value="A72235"/>
</dbReference>
<dbReference type="RefSeq" id="NP_229405.1">
    <property type="nucleotide sequence ID" value="NC_000853.1"/>
</dbReference>
<dbReference type="RefSeq" id="WP_004082052.1">
    <property type="nucleotide sequence ID" value="NZ_CP011107.1"/>
</dbReference>
<dbReference type="SMR" id="Q9X1U1"/>
<dbReference type="FunCoup" id="Q9X1U1">
    <property type="interactions" value="391"/>
</dbReference>
<dbReference type="STRING" id="243274.TM_1605"/>
<dbReference type="PaxDb" id="243274-THEMA_06225"/>
<dbReference type="EnsemblBacteria" id="AAD36672">
    <property type="protein sequence ID" value="AAD36672"/>
    <property type="gene ID" value="TM_1605"/>
</dbReference>
<dbReference type="KEGG" id="tma:TM1605"/>
<dbReference type="KEGG" id="tmi:THEMA_06225"/>
<dbReference type="KEGG" id="tmm:Tmari_1613"/>
<dbReference type="KEGG" id="tmw:THMA_1645"/>
<dbReference type="eggNOG" id="COG0264">
    <property type="taxonomic scope" value="Bacteria"/>
</dbReference>
<dbReference type="InParanoid" id="Q9X1U1"/>
<dbReference type="OrthoDB" id="9808348at2"/>
<dbReference type="Proteomes" id="UP000008183">
    <property type="component" value="Chromosome"/>
</dbReference>
<dbReference type="GO" id="GO:0005737">
    <property type="term" value="C:cytoplasm"/>
    <property type="evidence" value="ECO:0007669"/>
    <property type="project" value="UniProtKB-SubCell"/>
</dbReference>
<dbReference type="GO" id="GO:0003746">
    <property type="term" value="F:translation elongation factor activity"/>
    <property type="evidence" value="ECO:0007669"/>
    <property type="project" value="UniProtKB-UniRule"/>
</dbReference>
<dbReference type="CDD" id="cd14275">
    <property type="entry name" value="UBA_EF-Ts"/>
    <property type="match status" value="1"/>
</dbReference>
<dbReference type="FunFam" id="1.10.286.20:FF:000001">
    <property type="entry name" value="Elongation factor Ts"/>
    <property type="match status" value="1"/>
</dbReference>
<dbReference type="FunFam" id="1.10.8.10:FF:000001">
    <property type="entry name" value="Elongation factor Ts"/>
    <property type="match status" value="1"/>
</dbReference>
<dbReference type="Gene3D" id="1.10.286.20">
    <property type="match status" value="1"/>
</dbReference>
<dbReference type="Gene3D" id="1.10.8.10">
    <property type="entry name" value="DNA helicase RuvA subunit, C-terminal domain"/>
    <property type="match status" value="1"/>
</dbReference>
<dbReference type="Gene3D" id="3.30.479.20">
    <property type="entry name" value="Elongation factor Ts, dimerisation domain"/>
    <property type="match status" value="1"/>
</dbReference>
<dbReference type="HAMAP" id="MF_00050">
    <property type="entry name" value="EF_Ts"/>
    <property type="match status" value="1"/>
</dbReference>
<dbReference type="InterPro" id="IPR036402">
    <property type="entry name" value="EF-Ts_dimer_sf"/>
</dbReference>
<dbReference type="InterPro" id="IPR001816">
    <property type="entry name" value="Transl_elong_EFTs/EF1B"/>
</dbReference>
<dbReference type="InterPro" id="IPR014039">
    <property type="entry name" value="Transl_elong_EFTs/EF1B_dimer"/>
</dbReference>
<dbReference type="InterPro" id="IPR018101">
    <property type="entry name" value="Transl_elong_Ts_CS"/>
</dbReference>
<dbReference type="InterPro" id="IPR009060">
    <property type="entry name" value="UBA-like_sf"/>
</dbReference>
<dbReference type="NCBIfam" id="TIGR00116">
    <property type="entry name" value="tsf"/>
    <property type="match status" value="1"/>
</dbReference>
<dbReference type="PANTHER" id="PTHR11741">
    <property type="entry name" value="ELONGATION FACTOR TS"/>
    <property type="match status" value="1"/>
</dbReference>
<dbReference type="PANTHER" id="PTHR11741:SF0">
    <property type="entry name" value="ELONGATION FACTOR TS, MITOCHONDRIAL"/>
    <property type="match status" value="1"/>
</dbReference>
<dbReference type="Pfam" id="PF00889">
    <property type="entry name" value="EF_TS"/>
    <property type="match status" value="1"/>
</dbReference>
<dbReference type="SUPFAM" id="SSF54713">
    <property type="entry name" value="Elongation factor Ts (EF-Ts), dimerisation domain"/>
    <property type="match status" value="1"/>
</dbReference>
<dbReference type="SUPFAM" id="SSF46934">
    <property type="entry name" value="UBA-like"/>
    <property type="match status" value="1"/>
</dbReference>
<dbReference type="PROSITE" id="PS01126">
    <property type="entry name" value="EF_TS_1"/>
    <property type="match status" value="1"/>
</dbReference>
<dbReference type="PROSITE" id="PS01127">
    <property type="entry name" value="EF_TS_2"/>
    <property type="match status" value="1"/>
</dbReference>
<organism>
    <name type="scientific">Thermotoga maritima (strain ATCC 43589 / DSM 3109 / JCM 10099 / NBRC 100826 / MSB8)</name>
    <dbReference type="NCBI Taxonomy" id="243274"/>
    <lineage>
        <taxon>Bacteria</taxon>
        <taxon>Thermotogati</taxon>
        <taxon>Thermotogota</taxon>
        <taxon>Thermotogae</taxon>
        <taxon>Thermotogales</taxon>
        <taxon>Thermotogaceae</taxon>
        <taxon>Thermotoga</taxon>
    </lineage>
</organism>
<proteinExistence type="inferred from homology"/>
<name>EFTS_THEMA</name>
<evidence type="ECO:0000250" key="1"/>
<evidence type="ECO:0000305" key="2"/>
<sequence>MEISMDLIKKLREMTGAGILDCKKALEEANGDMEKAVEILRKKGAATAEKKAGRTTKEGIIVAYVHFNGRIGVLLEMNCETDFVARTDEFKELAYNLAKQVAAMKPLYVRREDVPAEVIEKEKEIYRAQIKDKPENIVEKIVEGKLEKFFEQACLYEQTYIFDDTKKVKDLINELIAKTGENIRVSRFTRYEIGEGYED</sequence>
<gene>
    <name type="primary">tsf</name>
    <name type="ordered locus">TM_1605</name>
</gene>
<comment type="function">
    <text evidence="1">Associates with the EF-Tu.GDP complex and induces the exchange of GDP to GTP. It remains bound to the aminoacyl-tRNA.EF-Tu.GTP complex up to the GTP hydrolysis stage on the ribosome (By similarity).</text>
</comment>
<comment type="subcellular location">
    <subcellularLocation>
        <location evidence="1">Cytoplasm</location>
    </subcellularLocation>
</comment>
<comment type="similarity">
    <text evidence="2">Belongs to the EF-Ts family.</text>
</comment>
<keyword id="KW-0963">Cytoplasm</keyword>
<keyword id="KW-0251">Elongation factor</keyword>
<keyword id="KW-0648">Protein biosynthesis</keyword>
<keyword id="KW-1185">Reference proteome</keyword>
<feature type="chain" id="PRO_0000161220" description="Elongation factor Ts">
    <location>
        <begin position="1"/>
        <end position="199"/>
    </location>
</feature>
<feature type="region of interest" description="Involved in Mg(2+) ion dislocation from EF-Tu" evidence="1">
    <location>
        <begin position="81"/>
        <end position="84"/>
    </location>
</feature>
<accession>Q9X1U1</accession>
<reference key="1">
    <citation type="journal article" date="1999" name="Nature">
        <title>Evidence for lateral gene transfer between Archaea and Bacteria from genome sequence of Thermotoga maritima.</title>
        <authorList>
            <person name="Nelson K.E."/>
            <person name="Clayton R.A."/>
            <person name="Gill S.R."/>
            <person name="Gwinn M.L."/>
            <person name="Dodson R.J."/>
            <person name="Haft D.H."/>
            <person name="Hickey E.K."/>
            <person name="Peterson J.D."/>
            <person name="Nelson W.C."/>
            <person name="Ketchum K.A."/>
            <person name="McDonald L.A."/>
            <person name="Utterback T.R."/>
            <person name="Malek J.A."/>
            <person name="Linher K.D."/>
            <person name="Garrett M.M."/>
            <person name="Stewart A.M."/>
            <person name="Cotton M.D."/>
            <person name="Pratt M.S."/>
            <person name="Phillips C.A."/>
            <person name="Richardson D.L."/>
            <person name="Heidelberg J.F."/>
            <person name="Sutton G.G."/>
            <person name="Fleischmann R.D."/>
            <person name="Eisen J.A."/>
            <person name="White O."/>
            <person name="Salzberg S.L."/>
            <person name="Smith H.O."/>
            <person name="Venter J.C."/>
            <person name="Fraser C.M."/>
        </authorList>
    </citation>
    <scope>NUCLEOTIDE SEQUENCE [LARGE SCALE GENOMIC DNA]</scope>
    <source>
        <strain>ATCC 43589 / DSM 3109 / JCM 10099 / NBRC 100826 / MSB8</strain>
    </source>
</reference>
<protein>
    <recommendedName>
        <fullName>Elongation factor Ts</fullName>
        <shortName>EF-Ts</shortName>
    </recommendedName>
</protein>